<accession>B2A2Z7</accession>
<organism>
    <name type="scientific">Natranaerobius thermophilus (strain ATCC BAA-1301 / DSM 18059 / JW/NM-WN-LF)</name>
    <dbReference type="NCBI Taxonomy" id="457570"/>
    <lineage>
        <taxon>Bacteria</taxon>
        <taxon>Bacillati</taxon>
        <taxon>Bacillota</taxon>
        <taxon>Clostridia</taxon>
        <taxon>Natranaerobiales</taxon>
        <taxon>Natranaerobiaceae</taxon>
        <taxon>Natranaerobius</taxon>
    </lineage>
</organism>
<protein>
    <recommendedName>
        <fullName evidence="1">Pyridoxal 5'-phosphate synthase subunit PdxS</fullName>
        <shortName evidence="1">PLP synthase subunit PdxS</shortName>
        <ecNumber evidence="1">4.3.3.6</ecNumber>
    </recommendedName>
    <alternativeName>
        <fullName evidence="1">Pdx1</fullName>
    </alternativeName>
</protein>
<name>PDXS_NATTJ</name>
<keyword id="KW-0456">Lyase</keyword>
<keyword id="KW-0663">Pyridoxal phosphate</keyword>
<keyword id="KW-1185">Reference proteome</keyword>
<keyword id="KW-0704">Schiff base</keyword>
<comment type="function">
    <text evidence="1">Catalyzes the formation of pyridoxal 5'-phosphate from ribose 5-phosphate (RBP), glyceraldehyde 3-phosphate (G3P) and ammonia. The ammonia is provided by the PdxT subunit. Can also use ribulose 5-phosphate and dihydroxyacetone phosphate as substrates, resulting from enzyme-catalyzed isomerization of RBP and G3P, respectively.</text>
</comment>
<comment type="catalytic activity">
    <reaction evidence="1">
        <text>aldehydo-D-ribose 5-phosphate + D-glyceraldehyde 3-phosphate + L-glutamine = pyridoxal 5'-phosphate + L-glutamate + phosphate + 3 H2O + H(+)</text>
        <dbReference type="Rhea" id="RHEA:31507"/>
        <dbReference type="ChEBI" id="CHEBI:15377"/>
        <dbReference type="ChEBI" id="CHEBI:15378"/>
        <dbReference type="ChEBI" id="CHEBI:29985"/>
        <dbReference type="ChEBI" id="CHEBI:43474"/>
        <dbReference type="ChEBI" id="CHEBI:58273"/>
        <dbReference type="ChEBI" id="CHEBI:58359"/>
        <dbReference type="ChEBI" id="CHEBI:59776"/>
        <dbReference type="ChEBI" id="CHEBI:597326"/>
        <dbReference type="EC" id="4.3.3.6"/>
    </reaction>
</comment>
<comment type="pathway">
    <text evidence="1">Cofactor biosynthesis; pyridoxal 5'-phosphate biosynthesis.</text>
</comment>
<comment type="subunit">
    <text evidence="1">In the presence of PdxT, forms a dodecamer of heterodimers.</text>
</comment>
<comment type="similarity">
    <text evidence="1">Belongs to the PdxS/SNZ family.</text>
</comment>
<gene>
    <name evidence="1" type="primary">pdxS</name>
    <name type="ordered locus">Nther_0012</name>
</gene>
<feature type="chain" id="PRO_1000188237" description="Pyridoxal 5'-phosphate synthase subunit PdxS">
    <location>
        <begin position="1"/>
        <end position="295"/>
    </location>
</feature>
<feature type="active site" description="Schiff-base intermediate with D-ribose 5-phosphate" evidence="1">
    <location>
        <position position="82"/>
    </location>
</feature>
<feature type="binding site" evidence="1">
    <location>
        <position position="25"/>
    </location>
    <ligand>
        <name>D-ribose 5-phosphate</name>
        <dbReference type="ChEBI" id="CHEBI:78346"/>
    </ligand>
</feature>
<feature type="binding site" evidence="1">
    <location>
        <position position="154"/>
    </location>
    <ligand>
        <name>D-ribose 5-phosphate</name>
        <dbReference type="ChEBI" id="CHEBI:78346"/>
    </ligand>
</feature>
<feature type="binding site" evidence="1">
    <location>
        <position position="166"/>
    </location>
    <ligand>
        <name>D-glyceraldehyde 3-phosphate</name>
        <dbReference type="ChEBI" id="CHEBI:59776"/>
    </ligand>
</feature>
<feature type="binding site" evidence="1">
    <location>
        <position position="215"/>
    </location>
    <ligand>
        <name>D-ribose 5-phosphate</name>
        <dbReference type="ChEBI" id="CHEBI:78346"/>
    </ligand>
</feature>
<feature type="binding site" evidence="1">
    <location>
        <begin position="236"/>
        <end position="237"/>
    </location>
    <ligand>
        <name>D-ribose 5-phosphate</name>
        <dbReference type="ChEBI" id="CHEBI:78346"/>
    </ligand>
</feature>
<reference key="1">
    <citation type="submission" date="2008-04" db="EMBL/GenBank/DDBJ databases">
        <title>Complete sequence of chromosome of Natranaerobius thermophilus JW/NM-WN-LF.</title>
        <authorList>
            <consortium name="US DOE Joint Genome Institute"/>
            <person name="Copeland A."/>
            <person name="Lucas S."/>
            <person name="Lapidus A."/>
            <person name="Glavina del Rio T."/>
            <person name="Dalin E."/>
            <person name="Tice H."/>
            <person name="Bruce D."/>
            <person name="Goodwin L."/>
            <person name="Pitluck S."/>
            <person name="Chertkov O."/>
            <person name="Brettin T."/>
            <person name="Detter J.C."/>
            <person name="Han C."/>
            <person name="Kuske C.R."/>
            <person name="Schmutz J."/>
            <person name="Larimer F."/>
            <person name="Land M."/>
            <person name="Hauser L."/>
            <person name="Kyrpides N."/>
            <person name="Lykidis A."/>
            <person name="Mesbah N.M."/>
            <person name="Wiegel J."/>
        </authorList>
    </citation>
    <scope>NUCLEOTIDE SEQUENCE [LARGE SCALE GENOMIC DNA]</scope>
    <source>
        <strain>ATCC BAA-1301 / DSM 18059 / JW/NM-WN-LF</strain>
    </source>
</reference>
<sequence>MNIEKGTETVKKGMAQMQKGGVIMDVTTPEQAKIAEKAGAVAVMALEKVPADIRAGGGVARMADPEVIKKIMDAVSIPVMAKARIGHFVEARILENLGVDYIDESEVLTPADEYYHIDKNKFTVPFVCGARNLGEALRRVGEGASMMRTKGEAGTGNVVEAVRHIRTVMDGIRKVQNLPDDELMTEAKNIGAPYDLIKQVKEEGRLPVVNFAAGGVATPADAALMMQLGADGVFVGSGIFKSGDPEKRAKSIVEATLNYDNYDVLADVSSGLGEAMVGINVSDLEEQERMQNRGW</sequence>
<dbReference type="EC" id="4.3.3.6" evidence="1"/>
<dbReference type="EMBL" id="CP001034">
    <property type="protein sequence ID" value="ACB83611.1"/>
    <property type="molecule type" value="Genomic_DNA"/>
</dbReference>
<dbReference type="RefSeq" id="WP_012446502.1">
    <property type="nucleotide sequence ID" value="NC_010718.1"/>
</dbReference>
<dbReference type="SMR" id="B2A2Z7"/>
<dbReference type="FunCoup" id="B2A2Z7">
    <property type="interactions" value="199"/>
</dbReference>
<dbReference type="STRING" id="457570.Nther_0012"/>
<dbReference type="KEGG" id="nth:Nther_0012"/>
<dbReference type="eggNOG" id="COG0214">
    <property type="taxonomic scope" value="Bacteria"/>
</dbReference>
<dbReference type="HOGENOM" id="CLU_055352_1_0_9"/>
<dbReference type="InParanoid" id="B2A2Z7"/>
<dbReference type="OrthoDB" id="9772545at2"/>
<dbReference type="UniPathway" id="UPA00245"/>
<dbReference type="Proteomes" id="UP000001683">
    <property type="component" value="Chromosome"/>
</dbReference>
<dbReference type="GO" id="GO:0036381">
    <property type="term" value="F:pyridoxal 5'-phosphate synthase (glutamine hydrolysing) activity"/>
    <property type="evidence" value="ECO:0007669"/>
    <property type="project" value="UniProtKB-UniRule"/>
</dbReference>
<dbReference type="GO" id="GO:0006520">
    <property type="term" value="P:amino acid metabolic process"/>
    <property type="evidence" value="ECO:0007669"/>
    <property type="project" value="TreeGrafter"/>
</dbReference>
<dbReference type="GO" id="GO:0042823">
    <property type="term" value="P:pyridoxal phosphate biosynthetic process"/>
    <property type="evidence" value="ECO:0007669"/>
    <property type="project" value="UniProtKB-UniRule"/>
</dbReference>
<dbReference type="GO" id="GO:0008615">
    <property type="term" value="P:pyridoxine biosynthetic process"/>
    <property type="evidence" value="ECO:0007669"/>
    <property type="project" value="TreeGrafter"/>
</dbReference>
<dbReference type="CDD" id="cd04727">
    <property type="entry name" value="pdxS"/>
    <property type="match status" value="1"/>
</dbReference>
<dbReference type="FunFam" id="3.20.20.70:FF:000001">
    <property type="entry name" value="Pyridoxine biosynthesis protein PDX1"/>
    <property type="match status" value="1"/>
</dbReference>
<dbReference type="Gene3D" id="3.20.20.70">
    <property type="entry name" value="Aldolase class I"/>
    <property type="match status" value="1"/>
</dbReference>
<dbReference type="HAMAP" id="MF_01824">
    <property type="entry name" value="PdxS"/>
    <property type="match status" value="1"/>
</dbReference>
<dbReference type="InterPro" id="IPR013785">
    <property type="entry name" value="Aldolase_TIM"/>
</dbReference>
<dbReference type="InterPro" id="IPR001852">
    <property type="entry name" value="PdxS/SNZ"/>
</dbReference>
<dbReference type="InterPro" id="IPR033755">
    <property type="entry name" value="PdxS/SNZ_N"/>
</dbReference>
<dbReference type="InterPro" id="IPR011060">
    <property type="entry name" value="RibuloseP-bd_barrel"/>
</dbReference>
<dbReference type="NCBIfam" id="NF003215">
    <property type="entry name" value="PRK04180.1"/>
    <property type="match status" value="1"/>
</dbReference>
<dbReference type="NCBIfam" id="TIGR00343">
    <property type="entry name" value="pyridoxal 5'-phosphate synthase lyase subunit PdxS"/>
    <property type="match status" value="1"/>
</dbReference>
<dbReference type="PANTHER" id="PTHR31829">
    <property type="entry name" value="PYRIDOXAL 5'-PHOSPHATE SYNTHASE SUBUNIT SNZ1-RELATED"/>
    <property type="match status" value="1"/>
</dbReference>
<dbReference type="PANTHER" id="PTHR31829:SF0">
    <property type="entry name" value="PYRIDOXAL 5'-PHOSPHATE SYNTHASE SUBUNIT SNZ1-RELATED"/>
    <property type="match status" value="1"/>
</dbReference>
<dbReference type="Pfam" id="PF01680">
    <property type="entry name" value="SOR_SNZ"/>
    <property type="match status" value="1"/>
</dbReference>
<dbReference type="PIRSF" id="PIRSF029271">
    <property type="entry name" value="Pdx1"/>
    <property type="match status" value="1"/>
</dbReference>
<dbReference type="SUPFAM" id="SSF51366">
    <property type="entry name" value="Ribulose-phoshate binding barrel"/>
    <property type="match status" value="1"/>
</dbReference>
<dbReference type="PROSITE" id="PS01235">
    <property type="entry name" value="PDXS_SNZ_1"/>
    <property type="match status" value="1"/>
</dbReference>
<dbReference type="PROSITE" id="PS51129">
    <property type="entry name" value="PDXS_SNZ_2"/>
    <property type="match status" value="1"/>
</dbReference>
<evidence type="ECO:0000255" key="1">
    <source>
        <dbReference type="HAMAP-Rule" id="MF_01824"/>
    </source>
</evidence>
<proteinExistence type="inferred from homology"/>